<evidence type="ECO:0000255" key="1">
    <source>
        <dbReference type="HAMAP-Rule" id="MF_01208"/>
    </source>
</evidence>
<protein>
    <recommendedName>
        <fullName evidence="1">Orotate phosphoribosyltransferase</fullName>
        <shortName evidence="1">OPRT</shortName>
        <shortName evidence="1">OPRTase</shortName>
        <ecNumber evidence="1">2.4.2.10</ecNumber>
    </recommendedName>
</protein>
<organism>
    <name type="scientific">Escherichia coli (strain SE11)</name>
    <dbReference type="NCBI Taxonomy" id="409438"/>
    <lineage>
        <taxon>Bacteria</taxon>
        <taxon>Pseudomonadati</taxon>
        <taxon>Pseudomonadota</taxon>
        <taxon>Gammaproteobacteria</taxon>
        <taxon>Enterobacterales</taxon>
        <taxon>Enterobacteriaceae</taxon>
        <taxon>Escherichia</taxon>
    </lineage>
</organism>
<accession>B6I3L9</accession>
<gene>
    <name evidence="1" type="primary">pyrE</name>
    <name type="ordered locus">ECSE_3922</name>
</gene>
<keyword id="KW-0328">Glycosyltransferase</keyword>
<keyword id="KW-0460">Magnesium</keyword>
<keyword id="KW-0665">Pyrimidine biosynthesis</keyword>
<keyword id="KW-0808">Transferase</keyword>
<proteinExistence type="inferred from homology"/>
<sequence length="213" mass="23567">MKPYQRQFIEFALGKQVLKFGEFTLKSGRKSPYFFNAGLFNTGRDLALLGRFYAEALVDSGLEFDLLFGPAYKGIPIATTTAVALAEHHDLDLPYCFNRKEAKDHGEGGNLVGSALQGRVMLVDDVITAGTAIRESMEIIQANGATLAGVLISLDRQERGRSEISAIQEVERDYNCKVISIITLKDLIAYLEEKPEMAEHLAAVKAYREEFGV</sequence>
<comment type="function">
    <text evidence="1">Catalyzes the transfer of a ribosyl phosphate group from 5-phosphoribose 1-diphosphate to orotate, leading to the formation of orotidine monophosphate (OMP).</text>
</comment>
<comment type="catalytic activity">
    <reaction evidence="1">
        <text>orotidine 5'-phosphate + diphosphate = orotate + 5-phospho-alpha-D-ribose 1-diphosphate</text>
        <dbReference type="Rhea" id="RHEA:10380"/>
        <dbReference type="ChEBI" id="CHEBI:30839"/>
        <dbReference type="ChEBI" id="CHEBI:33019"/>
        <dbReference type="ChEBI" id="CHEBI:57538"/>
        <dbReference type="ChEBI" id="CHEBI:58017"/>
        <dbReference type="EC" id="2.4.2.10"/>
    </reaction>
</comment>
<comment type="cofactor">
    <cofactor evidence="1">
        <name>Mg(2+)</name>
        <dbReference type="ChEBI" id="CHEBI:18420"/>
    </cofactor>
</comment>
<comment type="pathway">
    <text evidence="1">Pyrimidine metabolism; UMP biosynthesis via de novo pathway; UMP from orotate: step 1/2.</text>
</comment>
<comment type="subunit">
    <text evidence="1">Homodimer.</text>
</comment>
<comment type="similarity">
    <text evidence="1">Belongs to the purine/pyrimidine phosphoribosyltransferase family. PyrE subfamily.</text>
</comment>
<dbReference type="EC" id="2.4.2.10" evidence="1"/>
<dbReference type="EMBL" id="AP009240">
    <property type="protein sequence ID" value="BAG79446.1"/>
    <property type="molecule type" value="Genomic_DNA"/>
</dbReference>
<dbReference type="RefSeq" id="WP_000806162.1">
    <property type="nucleotide sequence ID" value="NC_011415.1"/>
</dbReference>
<dbReference type="SMR" id="B6I3L9"/>
<dbReference type="KEGG" id="ecy:ECSE_3922"/>
<dbReference type="HOGENOM" id="CLU_074878_0_1_6"/>
<dbReference type="UniPathway" id="UPA00070">
    <property type="reaction ID" value="UER00119"/>
</dbReference>
<dbReference type="Proteomes" id="UP000008199">
    <property type="component" value="Chromosome"/>
</dbReference>
<dbReference type="GO" id="GO:0005737">
    <property type="term" value="C:cytoplasm"/>
    <property type="evidence" value="ECO:0007669"/>
    <property type="project" value="TreeGrafter"/>
</dbReference>
<dbReference type="GO" id="GO:0000287">
    <property type="term" value="F:magnesium ion binding"/>
    <property type="evidence" value="ECO:0007669"/>
    <property type="project" value="UniProtKB-UniRule"/>
</dbReference>
<dbReference type="GO" id="GO:0004588">
    <property type="term" value="F:orotate phosphoribosyltransferase activity"/>
    <property type="evidence" value="ECO:0007669"/>
    <property type="project" value="UniProtKB-UniRule"/>
</dbReference>
<dbReference type="GO" id="GO:0006207">
    <property type="term" value="P:'de novo' pyrimidine nucleobase biosynthetic process"/>
    <property type="evidence" value="ECO:0007669"/>
    <property type="project" value="TreeGrafter"/>
</dbReference>
<dbReference type="GO" id="GO:0044205">
    <property type="term" value="P:'de novo' UMP biosynthetic process"/>
    <property type="evidence" value="ECO:0007669"/>
    <property type="project" value="UniProtKB-UniRule"/>
</dbReference>
<dbReference type="GO" id="GO:0046132">
    <property type="term" value="P:pyrimidine ribonucleoside biosynthetic process"/>
    <property type="evidence" value="ECO:0007669"/>
    <property type="project" value="TreeGrafter"/>
</dbReference>
<dbReference type="CDD" id="cd06223">
    <property type="entry name" value="PRTases_typeI"/>
    <property type="match status" value="1"/>
</dbReference>
<dbReference type="FunFam" id="3.40.50.2020:FF:000008">
    <property type="entry name" value="Orotate phosphoribosyltransferase"/>
    <property type="match status" value="1"/>
</dbReference>
<dbReference type="Gene3D" id="3.40.50.2020">
    <property type="match status" value="1"/>
</dbReference>
<dbReference type="HAMAP" id="MF_01208">
    <property type="entry name" value="PyrE"/>
    <property type="match status" value="1"/>
</dbReference>
<dbReference type="InterPro" id="IPR023031">
    <property type="entry name" value="OPRT"/>
</dbReference>
<dbReference type="InterPro" id="IPR004467">
    <property type="entry name" value="Or_phspho_trans_dom"/>
</dbReference>
<dbReference type="InterPro" id="IPR000836">
    <property type="entry name" value="PRibTrfase_dom"/>
</dbReference>
<dbReference type="InterPro" id="IPR029057">
    <property type="entry name" value="PRTase-like"/>
</dbReference>
<dbReference type="NCBIfam" id="TIGR00336">
    <property type="entry name" value="pyrE"/>
    <property type="match status" value="1"/>
</dbReference>
<dbReference type="PANTHER" id="PTHR46683">
    <property type="entry name" value="OROTATE PHOSPHORIBOSYLTRANSFERASE 1-RELATED"/>
    <property type="match status" value="1"/>
</dbReference>
<dbReference type="PANTHER" id="PTHR46683:SF1">
    <property type="entry name" value="OROTATE PHOSPHORIBOSYLTRANSFERASE 1-RELATED"/>
    <property type="match status" value="1"/>
</dbReference>
<dbReference type="Pfam" id="PF00156">
    <property type="entry name" value="Pribosyltran"/>
    <property type="match status" value="1"/>
</dbReference>
<dbReference type="SUPFAM" id="SSF53271">
    <property type="entry name" value="PRTase-like"/>
    <property type="match status" value="1"/>
</dbReference>
<dbReference type="PROSITE" id="PS00103">
    <property type="entry name" value="PUR_PYR_PR_TRANSFER"/>
    <property type="match status" value="1"/>
</dbReference>
<feature type="chain" id="PRO_1000138791" description="Orotate phosphoribosyltransferase">
    <location>
        <begin position="1"/>
        <end position="213"/>
    </location>
</feature>
<feature type="binding site" description="in other chain" evidence="1">
    <location>
        <position position="26"/>
    </location>
    <ligand>
        <name>5-phospho-alpha-D-ribose 1-diphosphate</name>
        <dbReference type="ChEBI" id="CHEBI:58017"/>
        <note>ligand shared between dimeric partners</note>
    </ligand>
</feature>
<feature type="binding site" evidence="1">
    <location>
        <begin position="34"/>
        <end position="35"/>
    </location>
    <ligand>
        <name>orotate</name>
        <dbReference type="ChEBI" id="CHEBI:30839"/>
    </ligand>
</feature>
<feature type="binding site" description="in other chain" evidence="1">
    <location>
        <begin position="72"/>
        <end position="73"/>
    </location>
    <ligand>
        <name>5-phospho-alpha-D-ribose 1-diphosphate</name>
        <dbReference type="ChEBI" id="CHEBI:58017"/>
        <note>ligand shared between dimeric partners</note>
    </ligand>
</feature>
<feature type="binding site" evidence="1">
    <location>
        <position position="99"/>
    </location>
    <ligand>
        <name>5-phospho-alpha-D-ribose 1-diphosphate</name>
        <dbReference type="ChEBI" id="CHEBI:58017"/>
        <note>ligand shared between dimeric partners</note>
    </ligand>
</feature>
<feature type="binding site" description="in other chain" evidence="1">
    <location>
        <position position="100"/>
    </location>
    <ligand>
        <name>5-phospho-alpha-D-ribose 1-diphosphate</name>
        <dbReference type="ChEBI" id="CHEBI:58017"/>
        <note>ligand shared between dimeric partners</note>
    </ligand>
</feature>
<feature type="binding site" evidence="1">
    <location>
        <position position="103"/>
    </location>
    <ligand>
        <name>5-phospho-alpha-D-ribose 1-diphosphate</name>
        <dbReference type="ChEBI" id="CHEBI:58017"/>
        <note>ligand shared between dimeric partners</note>
    </ligand>
</feature>
<feature type="binding site" evidence="1">
    <location>
        <position position="105"/>
    </location>
    <ligand>
        <name>5-phospho-alpha-D-ribose 1-diphosphate</name>
        <dbReference type="ChEBI" id="CHEBI:58017"/>
        <note>ligand shared between dimeric partners</note>
    </ligand>
</feature>
<feature type="binding site" description="in other chain" evidence="1">
    <location>
        <begin position="124"/>
        <end position="132"/>
    </location>
    <ligand>
        <name>5-phospho-alpha-D-ribose 1-diphosphate</name>
        <dbReference type="ChEBI" id="CHEBI:58017"/>
        <note>ligand shared between dimeric partners</note>
    </ligand>
</feature>
<feature type="binding site" evidence="1">
    <location>
        <position position="128"/>
    </location>
    <ligand>
        <name>orotate</name>
        <dbReference type="ChEBI" id="CHEBI:30839"/>
    </ligand>
</feature>
<feature type="binding site" evidence="1">
    <location>
        <position position="156"/>
    </location>
    <ligand>
        <name>orotate</name>
        <dbReference type="ChEBI" id="CHEBI:30839"/>
    </ligand>
</feature>
<name>PYRE_ECOSE</name>
<reference key="1">
    <citation type="journal article" date="2008" name="DNA Res.">
        <title>Complete genome sequence and comparative analysis of the wild-type commensal Escherichia coli strain SE11 isolated from a healthy adult.</title>
        <authorList>
            <person name="Oshima K."/>
            <person name="Toh H."/>
            <person name="Ogura Y."/>
            <person name="Sasamoto H."/>
            <person name="Morita H."/>
            <person name="Park S.-H."/>
            <person name="Ooka T."/>
            <person name="Iyoda S."/>
            <person name="Taylor T.D."/>
            <person name="Hayashi T."/>
            <person name="Itoh K."/>
            <person name="Hattori M."/>
        </authorList>
    </citation>
    <scope>NUCLEOTIDE SEQUENCE [LARGE SCALE GENOMIC DNA]</scope>
    <source>
        <strain>SE11</strain>
    </source>
</reference>